<comment type="function">
    <text evidence="1">Binds together with bS18 to 16S ribosomal RNA.</text>
</comment>
<comment type="similarity">
    <text evidence="1">Belongs to the bacterial ribosomal protein bS6 family.</text>
</comment>
<dbReference type="EMBL" id="AE016825">
    <property type="protein sequence ID" value="AAQ61302.1"/>
    <property type="molecule type" value="Genomic_DNA"/>
</dbReference>
<dbReference type="RefSeq" id="WP_011137187.1">
    <property type="nucleotide sequence ID" value="NC_005085.1"/>
</dbReference>
<dbReference type="SMR" id="Q7NRY7"/>
<dbReference type="STRING" id="243365.CV_3640"/>
<dbReference type="GeneID" id="66364873"/>
<dbReference type="KEGG" id="cvi:CV_3640"/>
<dbReference type="eggNOG" id="COG0360">
    <property type="taxonomic scope" value="Bacteria"/>
</dbReference>
<dbReference type="HOGENOM" id="CLU_113441_6_1_4"/>
<dbReference type="OrthoDB" id="9812702at2"/>
<dbReference type="Proteomes" id="UP000001424">
    <property type="component" value="Chromosome"/>
</dbReference>
<dbReference type="GO" id="GO:0022627">
    <property type="term" value="C:cytosolic small ribosomal subunit"/>
    <property type="evidence" value="ECO:0007669"/>
    <property type="project" value="TreeGrafter"/>
</dbReference>
<dbReference type="GO" id="GO:0070181">
    <property type="term" value="F:small ribosomal subunit rRNA binding"/>
    <property type="evidence" value="ECO:0007669"/>
    <property type="project" value="TreeGrafter"/>
</dbReference>
<dbReference type="GO" id="GO:0003735">
    <property type="term" value="F:structural constituent of ribosome"/>
    <property type="evidence" value="ECO:0007669"/>
    <property type="project" value="InterPro"/>
</dbReference>
<dbReference type="GO" id="GO:0006412">
    <property type="term" value="P:translation"/>
    <property type="evidence" value="ECO:0007669"/>
    <property type="project" value="UniProtKB-UniRule"/>
</dbReference>
<dbReference type="CDD" id="cd00473">
    <property type="entry name" value="bS6"/>
    <property type="match status" value="1"/>
</dbReference>
<dbReference type="FunFam" id="3.30.70.60:FF:000003">
    <property type="entry name" value="30S ribosomal protein S6"/>
    <property type="match status" value="1"/>
</dbReference>
<dbReference type="Gene3D" id="3.30.70.60">
    <property type="match status" value="1"/>
</dbReference>
<dbReference type="HAMAP" id="MF_00360">
    <property type="entry name" value="Ribosomal_bS6"/>
    <property type="match status" value="1"/>
</dbReference>
<dbReference type="InterPro" id="IPR000529">
    <property type="entry name" value="Ribosomal_bS6"/>
</dbReference>
<dbReference type="InterPro" id="IPR035980">
    <property type="entry name" value="Ribosomal_bS6_sf"/>
</dbReference>
<dbReference type="InterPro" id="IPR020814">
    <property type="entry name" value="Ribosomal_S6_plastid/chlpt"/>
</dbReference>
<dbReference type="InterPro" id="IPR014717">
    <property type="entry name" value="Transl_elong_EF1B/ribsomal_bS6"/>
</dbReference>
<dbReference type="NCBIfam" id="TIGR00166">
    <property type="entry name" value="S6"/>
    <property type="match status" value="1"/>
</dbReference>
<dbReference type="PANTHER" id="PTHR21011">
    <property type="entry name" value="MITOCHONDRIAL 28S RIBOSOMAL PROTEIN S6"/>
    <property type="match status" value="1"/>
</dbReference>
<dbReference type="PANTHER" id="PTHR21011:SF1">
    <property type="entry name" value="SMALL RIBOSOMAL SUBUNIT PROTEIN BS6M"/>
    <property type="match status" value="1"/>
</dbReference>
<dbReference type="Pfam" id="PF01250">
    <property type="entry name" value="Ribosomal_S6"/>
    <property type="match status" value="1"/>
</dbReference>
<dbReference type="SUPFAM" id="SSF54995">
    <property type="entry name" value="Ribosomal protein S6"/>
    <property type="match status" value="1"/>
</dbReference>
<evidence type="ECO:0000255" key="1">
    <source>
        <dbReference type="HAMAP-Rule" id="MF_00360"/>
    </source>
</evidence>
<evidence type="ECO:0000305" key="2"/>
<keyword id="KW-1185">Reference proteome</keyword>
<keyword id="KW-0687">Ribonucleoprotein</keyword>
<keyword id="KW-0689">Ribosomal protein</keyword>
<keyword id="KW-0694">RNA-binding</keyword>
<keyword id="KW-0699">rRNA-binding</keyword>
<protein>
    <recommendedName>
        <fullName evidence="1">Small ribosomal subunit protein bS6</fullName>
    </recommendedName>
    <alternativeName>
        <fullName evidence="2">30S ribosomal protein S6</fullName>
    </alternativeName>
</protein>
<name>RS6_CHRVO</name>
<feature type="chain" id="PRO_0000176754" description="Small ribosomal subunit protein bS6">
    <location>
        <begin position="1"/>
        <end position="124"/>
    </location>
</feature>
<sequence>MRHYEIVFIVHPDQSEQVPAMIERYKGMVLAAEGKIHRLEDWGRRQLAYPIQKLHKAHYVLMNVECQAETLAEIEHAFKFNDAVLRHLTIKMDRAISDASPMMKDEKAKNLLDAQPAAEVEASA</sequence>
<organism>
    <name type="scientific">Chromobacterium violaceum (strain ATCC 12472 / DSM 30191 / JCM 1249 / CCUG 213 / NBRC 12614 / NCIMB 9131 / NCTC 9757 / MK)</name>
    <dbReference type="NCBI Taxonomy" id="243365"/>
    <lineage>
        <taxon>Bacteria</taxon>
        <taxon>Pseudomonadati</taxon>
        <taxon>Pseudomonadota</taxon>
        <taxon>Betaproteobacteria</taxon>
        <taxon>Neisseriales</taxon>
        <taxon>Chromobacteriaceae</taxon>
        <taxon>Chromobacterium</taxon>
    </lineage>
</organism>
<reference key="1">
    <citation type="journal article" date="2003" name="Proc. Natl. Acad. Sci. U.S.A.">
        <title>The complete genome sequence of Chromobacterium violaceum reveals remarkable and exploitable bacterial adaptability.</title>
        <authorList>
            <person name="Vasconcelos A.T.R."/>
            <person name="de Almeida D.F."/>
            <person name="Hungria M."/>
            <person name="Guimaraes C.T."/>
            <person name="Antonio R.V."/>
            <person name="Almeida F.C."/>
            <person name="de Almeida L.G.P."/>
            <person name="de Almeida R."/>
            <person name="Alves-Gomes J.A."/>
            <person name="Andrade E.M."/>
            <person name="Araripe J."/>
            <person name="de Araujo M.F.F."/>
            <person name="Astolfi-Filho S."/>
            <person name="Azevedo V."/>
            <person name="Baptista A.J."/>
            <person name="Bataus L.A.M."/>
            <person name="Batista J.S."/>
            <person name="Belo A."/>
            <person name="van den Berg C."/>
            <person name="Bogo M."/>
            <person name="Bonatto S."/>
            <person name="Bordignon J."/>
            <person name="Brigido M.M."/>
            <person name="Brito C.A."/>
            <person name="Brocchi M."/>
            <person name="Burity H.A."/>
            <person name="Camargo A.A."/>
            <person name="Cardoso D.D.P."/>
            <person name="Carneiro N.P."/>
            <person name="Carraro D.M."/>
            <person name="Carvalho C.M.B."/>
            <person name="Cascardo J.C.M."/>
            <person name="Cavada B.S."/>
            <person name="Chueire L.M.O."/>
            <person name="Creczynski-Pasa T.B."/>
            <person name="Cunha-Junior N.C."/>
            <person name="Fagundes N."/>
            <person name="Falcao C.L."/>
            <person name="Fantinatti F."/>
            <person name="Farias I.P."/>
            <person name="Felipe M.S.S."/>
            <person name="Ferrari L.P."/>
            <person name="Ferro J.A."/>
            <person name="Ferro M.I.T."/>
            <person name="Franco G.R."/>
            <person name="Freitas N.S.A."/>
            <person name="Furlan L.R."/>
            <person name="Gazzinelli R.T."/>
            <person name="Gomes E.A."/>
            <person name="Goncalves P.R."/>
            <person name="Grangeiro T.B."/>
            <person name="Grattapaglia D."/>
            <person name="Grisard E.C."/>
            <person name="Hanna E.S."/>
            <person name="Jardim S.N."/>
            <person name="Laurino J."/>
            <person name="Leoi L.C.T."/>
            <person name="Lima L.F.A."/>
            <person name="Loureiro M.F."/>
            <person name="Lyra M.C.C.P."/>
            <person name="Madeira H.M.F."/>
            <person name="Manfio G.P."/>
            <person name="Maranhao A.Q."/>
            <person name="Martins W.S."/>
            <person name="di Mauro S.M.Z."/>
            <person name="de Medeiros S.R.B."/>
            <person name="Meissner R.V."/>
            <person name="Moreira M.A.M."/>
            <person name="Nascimento F.F."/>
            <person name="Nicolas M.F."/>
            <person name="Oliveira J.G."/>
            <person name="Oliveira S.C."/>
            <person name="Paixao R.F.C."/>
            <person name="Parente J.A."/>
            <person name="Pedrosa F.O."/>
            <person name="Pena S.D.J."/>
            <person name="Pereira J.O."/>
            <person name="Pereira M."/>
            <person name="Pinto L.S.R.C."/>
            <person name="Pinto L.S."/>
            <person name="Porto J.I.R."/>
            <person name="Potrich D.P."/>
            <person name="Ramalho-Neto C.E."/>
            <person name="Reis A.M.M."/>
            <person name="Rigo L.U."/>
            <person name="Rondinelli E."/>
            <person name="Santos E.B.P."/>
            <person name="Santos F.R."/>
            <person name="Schneider M.P.C."/>
            <person name="Seuanez H.N."/>
            <person name="Silva A.M.R."/>
            <person name="da Silva A.L.C."/>
            <person name="Silva D.W."/>
            <person name="Silva R."/>
            <person name="Simoes I.C."/>
            <person name="Simon D."/>
            <person name="Soares C.M.A."/>
            <person name="Soares R.B.A."/>
            <person name="Souza E.M."/>
            <person name="Souza K.R.L."/>
            <person name="Souza R.C."/>
            <person name="Steffens M.B.R."/>
            <person name="Steindel M."/>
            <person name="Teixeira S.R."/>
            <person name="Urmenyi T."/>
            <person name="Vettore A."/>
            <person name="Wassem R."/>
            <person name="Zaha A."/>
            <person name="Simpson A.J.G."/>
        </authorList>
    </citation>
    <scope>NUCLEOTIDE SEQUENCE [LARGE SCALE GENOMIC DNA]</scope>
    <source>
        <strain>ATCC 12472 / DSM 30191 / JCM 1249 / CCUG 213 / NBRC 12614 / NCIMB 9131 / NCTC 9757 / MK</strain>
    </source>
</reference>
<proteinExistence type="inferred from homology"/>
<accession>Q7NRY7</accession>
<gene>
    <name evidence="1" type="primary">rpsF</name>
    <name type="ordered locus">CV_3640</name>
</gene>